<feature type="chain" id="PRO_0000180528" description="DNA primase">
    <location>
        <begin position="1"/>
        <end position="694"/>
    </location>
</feature>
<feature type="domain" description="Toprim" evidence="1">
    <location>
        <begin position="265"/>
        <end position="348"/>
    </location>
</feature>
<feature type="zinc finger region" description="CHC2-type" evidence="1">
    <location>
        <begin position="41"/>
        <end position="65"/>
    </location>
</feature>
<feature type="binding site" evidence="1">
    <location>
        <position position="271"/>
    </location>
    <ligand>
        <name>Mg(2+)</name>
        <dbReference type="ChEBI" id="CHEBI:18420"/>
        <label>1</label>
        <note>catalytic</note>
    </ligand>
</feature>
<feature type="binding site" evidence="1">
    <location>
        <position position="317"/>
    </location>
    <ligand>
        <name>Mg(2+)</name>
        <dbReference type="ChEBI" id="CHEBI:18420"/>
        <label>1</label>
        <note>catalytic</note>
    </ligand>
</feature>
<feature type="binding site" evidence="1">
    <location>
        <position position="317"/>
    </location>
    <ligand>
        <name>Mg(2+)</name>
        <dbReference type="ChEBI" id="CHEBI:18420"/>
        <label>2</label>
    </ligand>
</feature>
<feature type="binding site" evidence="1">
    <location>
        <position position="319"/>
    </location>
    <ligand>
        <name>Mg(2+)</name>
        <dbReference type="ChEBI" id="CHEBI:18420"/>
        <label>2</label>
    </ligand>
</feature>
<feature type="mutagenesis site" description="Cell contains less chromosomes than the equivalent wild-type, but grows at the same rate." evidence="2">
    <original>C</original>
    <variation>S</variation>
    <location>
        <position position="597"/>
    </location>
</feature>
<feature type="sequence conflict" description="In Ref. 2; CAA63931." evidence="3" ref="2">
    <original>G</original>
    <variation>A</variation>
    <location>
        <position position="223"/>
    </location>
</feature>
<feature type="sequence conflict" description="In Ref. 2; CAA63931." evidence="3" ref="2">
    <original>CI</original>
    <variation>LH</variation>
    <location>
        <begin position="615"/>
        <end position="616"/>
    </location>
</feature>
<comment type="function">
    <text evidence="1">RNA polymerase that catalyzes the synthesis of short RNA molecules used as primers for DNA polymerase during DNA replication.</text>
</comment>
<comment type="catalytic activity">
    <reaction evidence="1">
        <text>ssDNA + n NTP = ssDNA/pppN(pN)n-1 hybrid + (n-1) diphosphate.</text>
        <dbReference type="EC" id="2.7.7.101"/>
    </reaction>
</comment>
<comment type="cofactor">
    <cofactor evidence="1">
        <name>Zn(2+)</name>
        <dbReference type="ChEBI" id="CHEBI:29105"/>
    </cofactor>
    <text evidence="1">Binds 1 zinc ion per monomer.</text>
</comment>
<comment type="cofactor">
    <cofactor evidence="1">
        <name>Mg(2+)</name>
        <dbReference type="ChEBI" id="CHEBI:18420"/>
    </cofactor>
    <text evidence="1">Binds two Mg(2+) per subunit.</text>
</comment>
<comment type="subunit">
    <text evidence="1">Monomer. Interacts with DnaB.</text>
</comment>
<comment type="domain">
    <text evidence="1">Contains an N-terminal zinc-binding domain, a central core domain that contains the primase activity, and a C-terminal DnaB-binding domain.</text>
</comment>
<comment type="similarity">
    <text evidence="1">Belongs to the DnaG primase family.</text>
</comment>
<name>DNAG_SYNE7</name>
<sequence length="694" mass="78524">MDTPRLHPETIAAVKERADIVDIVSEQVVLKKRGKDFVGLCPFHDDKSPSFTVSPAKQFYYCFSCGAGGNPIKFLMELGKQSFSEVVLDLAKRYQVPVRTLEVQQHQELQRQLSRRERLYEVLAVATQFYEQSLRRPEGAAALDYLRRSRQLQESTIQKFQLGYAPAQWASLATHLIEQKRFPADLVEEAGLVVARRNGQGYYDRFRDRLMIPIHDLQGRVVGFGGRTLTGEEPKYLNSPETTLFEKGKLLFGLDKARAAIAKQDQAVVVEGYFDVIALHAAGIDHAVASLGTALSRQQVKLLSRYSESNQIVLNFDADRAGAKAAERAIGEVEDLAYQGQVQLRVLNLPGGKDADEYLQRHSVADYRELLARSPLWLDWQIDQLLRDRNLDQADQFQAVVQAIVQLLGKLPNTPLRTHYVHQVAERLSQGEARTAVQLASDLRAQVRGQRWHGQASRWEKPGDVSIREQAEAQILKVYLHCPRLRLAVRKTLHDREIQGFSLQPHRLLWQAIAEIEEAHLGFAAMYQVERGEGNGDDLAAIDLVPILRDRLDQLTGVSLGGFLELSENDHADLTHPLPLLRGAVALVERLRCEKRCRHLLDSWARQSIHTFEHCIEQLLQAGIGEDVDAEAQITALHEQLNQEALHFQKLYYNERRYLQQLDQERCLNPQAFLGMTEHDATAIAPTTPQPISA</sequence>
<accession>P74893</accession>
<accession>Q31NP7</accession>
<organism>
    <name type="scientific">Synechococcus elongatus (strain ATCC 33912 / PCC 7942 / FACHB-805)</name>
    <name type="common">Anacystis nidulans R2</name>
    <dbReference type="NCBI Taxonomy" id="1140"/>
    <lineage>
        <taxon>Bacteria</taxon>
        <taxon>Bacillati</taxon>
        <taxon>Cyanobacteriota</taxon>
        <taxon>Cyanophyceae</taxon>
        <taxon>Synechococcales</taxon>
        <taxon>Synechococcaceae</taxon>
        <taxon>Synechococcus</taxon>
    </lineage>
</organism>
<keyword id="KW-0235">DNA replication</keyword>
<keyword id="KW-0238">DNA-binding</keyword>
<keyword id="KW-0240">DNA-directed RNA polymerase</keyword>
<keyword id="KW-0460">Magnesium</keyword>
<keyword id="KW-0479">Metal-binding</keyword>
<keyword id="KW-0548">Nucleotidyltransferase</keyword>
<keyword id="KW-0639">Primosome</keyword>
<keyword id="KW-1185">Reference proteome</keyword>
<keyword id="KW-0804">Transcription</keyword>
<keyword id="KW-0808">Transferase</keyword>
<keyword id="KW-0862">Zinc</keyword>
<keyword id="KW-0863">Zinc-finger</keyword>
<reference key="1">
    <citation type="submission" date="2005-08" db="EMBL/GenBank/DDBJ databases">
        <title>Complete sequence of chromosome 1 of Synechococcus elongatus PCC 7942.</title>
        <authorList>
            <consortium name="US DOE Joint Genome Institute"/>
            <person name="Copeland A."/>
            <person name="Lucas S."/>
            <person name="Lapidus A."/>
            <person name="Barry K."/>
            <person name="Detter J.C."/>
            <person name="Glavina T."/>
            <person name="Hammon N."/>
            <person name="Israni S."/>
            <person name="Pitluck S."/>
            <person name="Schmutz J."/>
            <person name="Larimer F."/>
            <person name="Land M."/>
            <person name="Kyrpides N."/>
            <person name="Lykidis A."/>
            <person name="Golden S."/>
            <person name="Richardson P."/>
        </authorList>
    </citation>
    <scope>NUCLEOTIDE SEQUENCE [LARGE SCALE GENOMIC DNA]</scope>
    <source>
        <strain>ATCC 33912 / PCC 7942 / FACHB-805</strain>
    </source>
</reference>
<reference key="2">
    <citation type="journal article" date="1998" name="J. Biol. Chem.">
        <title>A carboxyl-terminal Cys2/His2-type zinc-finger motif in DNA primase influences DNA content in Synechococcus PCC 7942.</title>
        <authorList>
            <person name="Bird A.J."/>
            <person name="Turner-Cavet J.S."/>
            <person name="Lakey J.H."/>
            <person name="Robinson N.J."/>
        </authorList>
    </citation>
    <scope>NUCLEOTIDE SEQUENCE [GENOMIC DNA] OF 1-616</scope>
    <scope>MUTAGENESIS OF CYS-597</scope>
</reference>
<proteinExistence type="evidence at protein level"/>
<evidence type="ECO:0000255" key="1">
    <source>
        <dbReference type="HAMAP-Rule" id="MF_00974"/>
    </source>
</evidence>
<evidence type="ECO:0000269" key="2">
    <source>
    </source>
</evidence>
<evidence type="ECO:0000305" key="3"/>
<dbReference type="EC" id="2.7.7.101" evidence="1"/>
<dbReference type="EMBL" id="CP000100">
    <property type="protein sequence ID" value="ABB57322.1"/>
    <property type="molecule type" value="Genomic_DNA"/>
</dbReference>
<dbReference type="EMBL" id="X94247">
    <property type="protein sequence ID" value="CAA63931.1"/>
    <property type="molecule type" value="Genomic_DNA"/>
</dbReference>
<dbReference type="PIR" id="T11850">
    <property type="entry name" value="T11850"/>
</dbReference>
<dbReference type="RefSeq" id="WP_011377965.1">
    <property type="nucleotide sequence ID" value="NZ_JACJTX010000003.1"/>
</dbReference>
<dbReference type="SMR" id="P74893"/>
<dbReference type="STRING" id="1140.Synpcc7942_1292"/>
<dbReference type="PaxDb" id="1140-Synpcc7942_1292"/>
<dbReference type="GeneID" id="72430153"/>
<dbReference type="KEGG" id="syf:Synpcc7942_1292"/>
<dbReference type="eggNOG" id="COG0358">
    <property type="taxonomic scope" value="Bacteria"/>
</dbReference>
<dbReference type="HOGENOM" id="CLU_013501_3_1_3"/>
<dbReference type="OrthoDB" id="9803773at2"/>
<dbReference type="BioCyc" id="SYNEL:SYNPCC7942_1292-MONOMER"/>
<dbReference type="Proteomes" id="UP000889800">
    <property type="component" value="Chromosome"/>
</dbReference>
<dbReference type="GO" id="GO:0005737">
    <property type="term" value="C:cytoplasm"/>
    <property type="evidence" value="ECO:0007669"/>
    <property type="project" value="TreeGrafter"/>
</dbReference>
<dbReference type="GO" id="GO:0000428">
    <property type="term" value="C:DNA-directed RNA polymerase complex"/>
    <property type="evidence" value="ECO:0007669"/>
    <property type="project" value="UniProtKB-KW"/>
</dbReference>
<dbReference type="GO" id="GO:1990077">
    <property type="term" value="C:primosome complex"/>
    <property type="evidence" value="ECO:0007669"/>
    <property type="project" value="UniProtKB-KW"/>
</dbReference>
<dbReference type="GO" id="GO:0003677">
    <property type="term" value="F:DNA binding"/>
    <property type="evidence" value="ECO:0007669"/>
    <property type="project" value="UniProtKB-KW"/>
</dbReference>
<dbReference type="GO" id="GO:0003899">
    <property type="term" value="F:DNA-directed RNA polymerase activity"/>
    <property type="evidence" value="ECO:0007669"/>
    <property type="project" value="InterPro"/>
</dbReference>
<dbReference type="GO" id="GO:0008270">
    <property type="term" value="F:zinc ion binding"/>
    <property type="evidence" value="ECO:0007669"/>
    <property type="project" value="UniProtKB-UniRule"/>
</dbReference>
<dbReference type="GO" id="GO:0006269">
    <property type="term" value="P:DNA replication, synthesis of primer"/>
    <property type="evidence" value="ECO:0007669"/>
    <property type="project" value="UniProtKB-UniRule"/>
</dbReference>
<dbReference type="CDD" id="cd03364">
    <property type="entry name" value="TOPRIM_DnaG_primases"/>
    <property type="match status" value="1"/>
</dbReference>
<dbReference type="FunFam" id="3.40.1360.10:FF:000002">
    <property type="entry name" value="DNA primase"/>
    <property type="match status" value="1"/>
</dbReference>
<dbReference type="FunFam" id="3.90.580.10:FF:000001">
    <property type="entry name" value="DNA primase"/>
    <property type="match status" value="1"/>
</dbReference>
<dbReference type="FunFam" id="3.90.980.10:FF:000001">
    <property type="entry name" value="DNA primase"/>
    <property type="match status" value="1"/>
</dbReference>
<dbReference type="Gene3D" id="3.40.1360.10">
    <property type="match status" value="1"/>
</dbReference>
<dbReference type="Gene3D" id="3.90.980.10">
    <property type="entry name" value="DNA primase, catalytic core, N-terminal domain"/>
    <property type="match status" value="1"/>
</dbReference>
<dbReference type="Gene3D" id="3.90.580.10">
    <property type="entry name" value="Zinc finger, CHC2-type domain"/>
    <property type="match status" value="1"/>
</dbReference>
<dbReference type="HAMAP" id="MF_00974">
    <property type="entry name" value="DNA_primase_DnaG"/>
    <property type="match status" value="1"/>
</dbReference>
<dbReference type="InterPro" id="IPR037068">
    <property type="entry name" value="DNA_primase_core_N_sf"/>
</dbReference>
<dbReference type="InterPro" id="IPR019475">
    <property type="entry name" value="DNA_primase_DnaB-bd"/>
</dbReference>
<dbReference type="InterPro" id="IPR006295">
    <property type="entry name" value="DNA_primase_DnaG"/>
</dbReference>
<dbReference type="InterPro" id="IPR036977">
    <property type="entry name" value="DNA_primase_Znf_CHC2"/>
</dbReference>
<dbReference type="InterPro" id="IPR030846">
    <property type="entry name" value="DnaG_bac"/>
</dbReference>
<dbReference type="InterPro" id="IPR013264">
    <property type="entry name" value="DNAG_N"/>
</dbReference>
<dbReference type="InterPro" id="IPR050219">
    <property type="entry name" value="DnaG_primase"/>
</dbReference>
<dbReference type="InterPro" id="IPR034151">
    <property type="entry name" value="TOPRIM_DnaG_bac"/>
</dbReference>
<dbReference type="InterPro" id="IPR006171">
    <property type="entry name" value="TOPRIM_dom"/>
</dbReference>
<dbReference type="InterPro" id="IPR002694">
    <property type="entry name" value="Znf_CHC2"/>
</dbReference>
<dbReference type="NCBIfam" id="TIGR01391">
    <property type="entry name" value="dnaG"/>
    <property type="match status" value="1"/>
</dbReference>
<dbReference type="PANTHER" id="PTHR30313">
    <property type="entry name" value="DNA PRIMASE"/>
    <property type="match status" value="1"/>
</dbReference>
<dbReference type="PANTHER" id="PTHR30313:SF2">
    <property type="entry name" value="DNA PRIMASE"/>
    <property type="match status" value="1"/>
</dbReference>
<dbReference type="Pfam" id="PF10410">
    <property type="entry name" value="DnaB_bind"/>
    <property type="match status" value="1"/>
</dbReference>
<dbReference type="Pfam" id="PF08275">
    <property type="entry name" value="DNAG_N"/>
    <property type="match status" value="1"/>
</dbReference>
<dbReference type="Pfam" id="PF13155">
    <property type="entry name" value="Toprim_2"/>
    <property type="match status" value="1"/>
</dbReference>
<dbReference type="Pfam" id="PF01807">
    <property type="entry name" value="Zn_ribbon_DnaG"/>
    <property type="match status" value="1"/>
</dbReference>
<dbReference type="SMART" id="SM00493">
    <property type="entry name" value="TOPRIM"/>
    <property type="match status" value="1"/>
</dbReference>
<dbReference type="SMART" id="SM00400">
    <property type="entry name" value="ZnF_CHCC"/>
    <property type="match status" value="1"/>
</dbReference>
<dbReference type="SUPFAM" id="SSF56731">
    <property type="entry name" value="DNA primase core"/>
    <property type="match status" value="1"/>
</dbReference>
<dbReference type="SUPFAM" id="SSF57783">
    <property type="entry name" value="Zinc beta-ribbon"/>
    <property type="match status" value="1"/>
</dbReference>
<dbReference type="PROSITE" id="PS50880">
    <property type="entry name" value="TOPRIM"/>
    <property type="match status" value="1"/>
</dbReference>
<protein>
    <recommendedName>
        <fullName evidence="1">DNA primase</fullName>
        <ecNumber evidence="1">2.7.7.101</ecNumber>
    </recommendedName>
</protein>
<gene>
    <name evidence="1" type="primary">dnaG</name>
    <name type="ordered locus">Synpcc7942_1292</name>
</gene>